<accession>Q04G69</accession>
<organism>
    <name type="scientific">Oenococcus oeni (strain ATCC BAA-331 / PSU-1)</name>
    <dbReference type="NCBI Taxonomy" id="203123"/>
    <lineage>
        <taxon>Bacteria</taxon>
        <taxon>Bacillati</taxon>
        <taxon>Bacillota</taxon>
        <taxon>Bacilli</taxon>
        <taxon>Lactobacillales</taxon>
        <taxon>Lactobacillaceae</taxon>
        <taxon>Oenococcus</taxon>
    </lineage>
</organism>
<sequence>MAEYINPNALGDLEENVVSINRVTKVVKGGRRLRFSALVIVGDRNGHVGFGTGKAQEVPEAIRKAVEDAKRHLIKVPTVGTTIPHQVLGVDGGGKVLLKPASEGSGVAAGGSTRPIMELAGIPDVTAKSLGSSTAVNVVRATFDGLKNLKEAKVVAALRGVSLGE</sequence>
<keyword id="KW-1185">Reference proteome</keyword>
<keyword id="KW-0687">Ribonucleoprotein</keyword>
<keyword id="KW-0689">Ribosomal protein</keyword>
<keyword id="KW-0694">RNA-binding</keyword>
<keyword id="KW-0699">rRNA-binding</keyword>
<protein>
    <recommendedName>
        <fullName evidence="1">Small ribosomal subunit protein uS5</fullName>
    </recommendedName>
    <alternativeName>
        <fullName evidence="2">30S ribosomal protein S5</fullName>
    </alternativeName>
</protein>
<gene>
    <name evidence="1" type="primary">rpsE</name>
    <name type="ordered locus">OEOE_0611</name>
</gene>
<name>RS5_OENOB</name>
<dbReference type="EMBL" id="CP000411">
    <property type="protein sequence ID" value="ABJ56553.1"/>
    <property type="molecule type" value="Genomic_DNA"/>
</dbReference>
<dbReference type="RefSeq" id="WP_002818468.1">
    <property type="nucleotide sequence ID" value="NC_008528.1"/>
</dbReference>
<dbReference type="SMR" id="Q04G69"/>
<dbReference type="STRING" id="203123.OEOE_0611"/>
<dbReference type="GeneID" id="75065433"/>
<dbReference type="KEGG" id="ooe:OEOE_0611"/>
<dbReference type="eggNOG" id="COG0098">
    <property type="taxonomic scope" value="Bacteria"/>
</dbReference>
<dbReference type="HOGENOM" id="CLU_065898_2_2_9"/>
<dbReference type="Proteomes" id="UP000000774">
    <property type="component" value="Chromosome"/>
</dbReference>
<dbReference type="GO" id="GO:0015935">
    <property type="term" value="C:small ribosomal subunit"/>
    <property type="evidence" value="ECO:0007669"/>
    <property type="project" value="InterPro"/>
</dbReference>
<dbReference type="GO" id="GO:0019843">
    <property type="term" value="F:rRNA binding"/>
    <property type="evidence" value="ECO:0007669"/>
    <property type="project" value="UniProtKB-UniRule"/>
</dbReference>
<dbReference type="GO" id="GO:0003735">
    <property type="term" value="F:structural constituent of ribosome"/>
    <property type="evidence" value="ECO:0007669"/>
    <property type="project" value="InterPro"/>
</dbReference>
<dbReference type="GO" id="GO:0006412">
    <property type="term" value="P:translation"/>
    <property type="evidence" value="ECO:0007669"/>
    <property type="project" value="UniProtKB-UniRule"/>
</dbReference>
<dbReference type="FunFam" id="3.30.160.20:FF:000001">
    <property type="entry name" value="30S ribosomal protein S5"/>
    <property type="match status" value="1"/>
</dbReference>
<dbReference type="FunFam" id="3.30.230.10:FF:000002">
    <property type="entry name" value="30S ribosomal protein S5"/>
    <property type="match status" value="1"/>
</dbReference>
<dbReference type="Gene3D" id="3.30.160.20">
    <property type="match status" value="1"/>
</dbReference>
<dbReference type="Gene3D" id="3.30.230.10">
    <property type="match status" value="1"/>
</dbReference>
<dbReference type="HAMAP" id="MF_01307_B">
    <property type="entry name" value="Ribosomal_uS5_B"/>
    <property type="match status" value="1"/>
</dbReference>
<dbReference type="InterPro" id="IPR020568">
    <property type="entry name" value="Ribosomal_Su5_D2-typ_SF"/>
</dbReference>
<dbReference type="InterPro" id="IPR000851">
    <property type="entry name" value="Ribosomal_uS5"/>
</dbReference>
<dbReference type="InterPro" id="IPR005712">
    <property type="entry name" value="Ribosomal_uS5_bac-type"/>
</dbReference>
<dbReference type="InterPro" id="IPR005324">
    <property type="entry name" value="Ribosomal_uS5_C"/>
</dbReference>
<dbReference type="InterPro" id="IPR013810">
    <property type="entry name" value="Ribosomal_uS5_N"/>
</dbReference>
<dbReference type="InterPro" id="IPR018192">
    <property type="entry name" value="Ribosomal_uS5_N_CS"/>
</dbReference>
<dbReference type="InterPro" id="IPR014721">
    <property type="entry name" value="Ribsml_uS5_D2-typ_fold_subgr"/>
</dbReference>
<dbReference type="NCBIfam" id="TIGR01021">
    <property type="entry name" value="rpsE_bact"/>
    <property type="match status" value="1"/>
</dbReference>
<dbReference type="PANTHER" id="PTHR48277">
    <property type="entry name" value="MITOCHONDRIAL RIBOSOMAL PROTEIN S5"/>
    <property type="match status" value="1"/>
</dbReference>
<dbReference type="PANTHER" id="PTHR48277:SF1">
    <property type="entry name" value="MITOCHONDRIAL RIBOSOMAL PROTEIN S5"/>
    <property type="match status" value="1"/>
</dbReference>
<dbReference type="Pfam" id="PF00333">
    <property type="entry name" value="Ribosomal_S5"/>
    <property type="match status" value="1"/>
</dbReference>
<dbReference type="Pfam" id="PF03719">
    <property type="entry name" value="Ribosomal_S5_C"/>
    <property type="match status" value="1"/>
</dbReference>
<dbReference type="SUPFAM" id="SSF54768">
    <property type="entry name" value="dsRNA-binding domain-like"/>
    <property type="match status" value="1"/>
</dbReference>
<dbReference type="SUPFAM" id="SSF54211">
    <property type="entry name" value="Ribosomal protein S5 domain 2-like"/>
    <property type="match status" value="1"/>
</dbReference>
<dbReference type="PROSITE" id="PS00585">
    <property type="entry name" value="RIBOSOMAL_S5"/>
    <property type="match status" value="1"/>
</dbReference>
<dbReference type="PROSITE" id="PS50881">
    <property type="entry name" value="S5_DSRBD"/>
    <property type="match status" value="1"/>
</dbReference>
<proteinExistence type="inferred from homology"/>
<evidence type="ECO:0000255" key="1">
    <source>
        <dbReference type="HAMAP-Rule" id="MF_01307"/>
    </source>
</evidence>
<evidence type="ECO:0000305" key="2"/>
<reference key="1">
    <citation type="journal article" date="2006" name="Proc. Natl. Acad. Sci. U.S.A.">
        <title>Comparative genomics of the lactic acid bacteria.</title>
        <authorList>
            <person name="Makarova K.S."/>
            <person name="Slesarev A."/>
            <person name="Wolf Y.I."/>
            <person name="Sorokin A."/>
            <person name="Mirkin B."/>
            <person name="Koonin E.V."/>
            <person name="Pavlov A."/>
            <person name="Pavlova N."/>
            <person name="Karamychev V."/>
            <person name="Polouchine N."/>
            <person name="Shakhova V."/>
            <person name="Grigoriev I."/>
            <person name="Lou Y."/>
            <person name="Rohksar D."/>
            <person name="Lucas S."/>
            <person name="Huang K."/>
            <person name="Goodstein D.M."/>
            <person name="Hawkins T."/>
            <person name="Plengvidhya V."/>
            <person name="Welker D."/>
            <person name="Hughes J."/>
            <person name="Goh Y."/>
            <person name="Benson A."/>
            <person name="Baldwin K."/>
            <person name="Lee J.-H."/>
            <person name="Diaz-Muniz I."/>
            <person name="Dosti B."/>
            <person name="Smeianov V."/>
            <person name="Wechter W."/>
            <person name="Barabote R."/>
            <person name="Lorca G."/>
            <person name="Altermann E."/>
            <person name="Barrangou R."/>
            <person name="Ganesan B."/>
            <person name="Xie Y."/>
            <person name="Rawsthorne H."/>
            <person name="Tamir D."/>
            <person name="Parker C."/>
            <person name="Breidt F."/>
            <person name="Broadbent J.R."/>
            <person name="Hutkins R."/>
            <person name="O'Sullivan D."/>
            <person name="Steele J."/>
            <person name="Unlu G."/>
            <person name="Saier M.H. Jr."/>
            <person name="Klaenhammer T."/>
            <person name="Richardson P."/>
            <person name="Kozyavkin S."/>
            <person name="Weimer B.C."/>
            <person name="Mills D.A."/>
        </authorList>
    </citation>
    <scope>NUCLEOTIDE SEQUENCE [LARGE SCALE GENOMIC DNA]</scope>
    <source>
        <strain>ATCC BAA-331 / PSU-1</strain>
    </source>
</reference>
<feature type="chain" id="PRO_0000323163" description="Small ribosomal subunit protein uS5">
    <location>
        <begin position="1"/>
        <end position="165"/>
    </location>
</feature>
<feature type="domain" description="S5 DRBM" evidence="1">
    <location>
        <begin position="13"/>
        <end position="76"/>
    </location>
</feature>
<comment type="function">
    <text evidence="1">With S4 and S12 plays an important role in translational accuracy.</text>
</comment>
<comment type="function">
    <text evidence="1">Located at the back of the 30S subunit body where it stabilizes the conformation of the head with respect to the body.</text>
</comment>
<comment type="subunit">
    <text evidence="1">Part of the 30S ribosomal subunit. Contacts proteins S4 and S8.</text>
</comment>
<comment type="domain">
    <text>The N-terminal domain interacts with the head of the 30S subunit; the C-terminal domain interacts with the body and contacts protein S4. The interaction surface between S4 and S5 is involved in control of translational fidelity.</text>
</comment>
<comment type="similarity">
    <text evidence="1">Belongs to the universal ribosomal protein uS5 family.</text>
</comment>